<proteinExistence type="inferred from homology"/>
<accession>C1CPL3</accession>
<comment type="function">
    <text evidence="1">Catalyzes the initial step of the lipid cycle reactions in the biosynthesis of the cell wall peptidoglycan: transfers peptidoglycan precursor phospho-MurNAc-pentapeptide from UDP-MurNAc-pentapeptide onto the lipid carrier undecaprenyl phosphate, yielding undecaprenyl-pyrophosphoryl-MurNAc-pentapeptide, known as lipid I.</text>
</comment>
<comment type="catalytic activity">
    <reaction evidence="1">
        <text>UDP-N-acetyl-alpha-D-muramoyl-L-alanyl-gamma-D-glutamyl-L-lysyl-D-alanyl-D-alanine + di-trans,octa-cis-undecaprenyl phosphate = Mur2Ac(oyl-L-Ala-gamma-D-Glu-L-Lys-D-Ala-D-Ala)-di-trans,octa-cis-undecaprenyl diphosphate + UMP</text>
        <dbReference type="Rhea" id="RHEA:21920"/>
        <dbReference type="ChEBI" id="CHEBI:57865"/>
        <dbReference type="ChEBI" id="CHEBI:60032"/>
        <dbReference type="ChEBI" id="CHEBI:60392"/>
        <dbReference type="ChEBI" id="CHEBI:70758"/>
        <dbReference type="EC" id="2.7.8.13"/>
    </reaction>
</comment>
<comment type="cofactor">
    <cofactor evidence="1">
        <name>Mg(2+)</name>
        <dbReference type="ChEBI" id="CHEBI:18420"/>
    </cofactor>
</comment>
<comment type="pathway">
    <text evidence="1">Cell wall biogenesis; peptidoglycan biosynthesis.</text>
</comment>
<comment type="subcellular location">
    <subcellularLocation>
        <location evidence="1">Cell membrane</location>
        <topology evidence="1">Multi-pass membrane protein</topology>
    </subcellularLocation>
</comment>
<comment type="similarity">
    <text evidence="1">Belongs to the glycosyltransferase 4 family. MraY subfamily.</text>
</comment>
<feature type="chain" id="PRO_1000117202" description="Phospho-N-acetylmuramoyl-pentapeptide-transferase">
    <location>
        <begin position="1"/>
        <end position="326"/>
    </location>
</feature>
<feature type="transmembrane region" description="Helical" evidence="1">
    <location>
        <begin position="3"/>
        <end position="23"/>
    </location>
</feature>
<feature type="transmembrane region" description="Helical" evidence="1">
    <location>
        <begin position="51"/>
        <end position="71"/>
    </location>
</feature>
<feature type="transmembrane region" description="Helical" evidence="1">
    <location>
        <begin position="79"/>
        <end position="99"/>
    </location>
</feature>
<feature type="transmembrane region" description="Helical" evidence="1">
    <location>
        <begin position="115"/>
        <end position="135"/>
    </location>
</feature>
<feature type="transmembrane region" description="Helical" evidence="1">
    <location>
        <begin position="138"/>
        <end position="158"/>
    </location>
</feature>
<feature type="transmembrane region" description="Helical" evidence="1">
    <location>
        <begin position="169"/>
        <end position="189"/>
    </location>
</feature>
<feature type="transmembrane region" description="Helical" evidence="1">
    <location>
        <begin position="195"/>
        <end position="215"/>
    </location>
</feature>
<feature type="transmembrane region" description="Helical" evidence="1">
    <location>
        <begin position="221"/>
        <end position="243"/>
    </location>
</feature>
<feature type="transmembrane region" description="Helical" evidence="1">
    <location>
        <begin position="306"/>
        <end position="326"/>
    </location>
</feature>
<organism>
    <name type="scientific">Streptococcus pneumoniae (strain Taiwan19F-14)</name>
    <dbReference type="NCBI Taxonomy" id="487213"/>
    <lineage>
        <taxon>Bacteria</taxon>
        <taxon>Bacillati</taxon>
        <taxon>Bacillota</taxon>
        <taxon>Bacilli</taxon>
        <taxon>Lactobacillales</taxon>
        <taxon>Streptococcaceae</taxon>
        <taxon>Streptococcus</taxon>
    </lineage>
</organism>
<keyword id="KW-0131">Cell cycle</keyword>
<keyword id="KW-0132">Cell division</keyword>
<keyword id="KW-1003">Cell membrane</keyword>
<keyword id="KW-0133">Cell shape</keyword>
<keyword id="KW-0961">Cell wall biogenesis/degradation</keyword>
<keyword id="KW-0460">Magnesium</keyword>
<keyword id="KW-0472">Membrane</keyword>
<keyword id="KW-0479">Metal-binding</keyword>
<keyword id="KW-0573">Peptidoglycan synthesis</keyword>
<keyword id="KW-0808">Transferase</keyword>
<keyword id="KW-0812">Transmembrane</keyword>
<keyword id="KW-1133">Transmembrane helix</keyword>
<name>MRAY_STRZT</name>
<reference key="1">
    <citation type="journal article" date="2010" name="Genome Biol.">
        <title>Structure and dynamics of the pan-genome of Streptococcus pneumoniae and closely related species.</title>
        <authorList>
            <person name="Donati C."/>
            <person name="Hiller N.L."/>
            <person name="Tettelin H."/>
            <person name="Muzzi A."/>
            <person name="Croucher N.J."/>
            <person name="Angiuoli S.V."/>
            <person name="Oggioni M."/>
            <person name="Dunning Hotopp J.C."/>
            <person name="Hu F.Z."/>
            <person name="Riley D.R."/>
            <person name="Covacci A."/>
            <person name="Mitchell T.J."/>
            <person name="Bentley S.D."/>
            <person name="Kilian M."/>
            <person name="Ehrlich G.D."/>
            <person name="Rappuoli R."/>
            <person name="Moxon E.R."/>
            <person name="Masignani V."/>
        </authorList>
    </citation>
    <scope>NUCLEOTIDE SEQUENCE [LARGE SCALE GENOMIC DNA]</scope>
    <source>
        <strain>Taiwan19F-14</strain>
    </source>
</reference>
<gene>
    <name evidence="1" type="primary">mraY</name>
    <name type="ordered locus">SPT_0387</name>
</gene>
<evidence type="ECO:0000255" key="1">
    <source>
        <dbReference type="HAMAP-Rule" id="MF_00038"/>
    </source>
</evidence>
<protein>
    <recommendedName>
        <fullName evidence="1">Phospho-N-acetylmuramoyl-pentapeptide-transferase</fullName>
        <ecNumber evidence="1">2.7.8.13</ecNumber>
    </recommendedName>
    <alternativeName>
        <fullName evidence="1">UDP-MurNAc-pentapeptide phosphotransferase</fullName>
    </alternativeName>
</protein>
<dbReference type="EC" id="2.7.8.13" evidence="1"/>
<dbReference type="EMBL" id="CP000921">
    <property type="protein sequence ID" value="ACO22228.1"/>
    <property type="molecule type" value="Genomic_DNA"/>
</dbReference>
<dbReference type="RefSeq" id="WP_000470802.1">
    <property type="nucleotide sequence ID" value="NC_012469.1"/>
</dbReference>
<dbReference type="SMR" id="C1CPL3"/>
<dbReference type="KEGG" id="snt:SPT_0387"/>
<dbReference type="HOGENOM" id="CLU_023982_0_1_9"/>
<dbReference type="UniPathway" id="UPA00219"/>
<dbReference type="GO" id="GO:0005886">
    <property type="term" value="C:plasma membrane"/>
    <property type="evidence" value="ECO:0007669"/>
    <property type="project" value="UniProtKB-SubCell"/>
</dbReference>
<dbReference type="GO" id="GO:0046872">
    <property type="term" value="F:metal ion binding"/>
    <property type="evidence" value="ECO:0007669"/>
    <property type="project" value="UniProtKB-KW"/>
</dbReference>
<dbReference type="GO" id="GO:0008963">
    <property type="term" value="F:phospho-N-acetylmuramoyl-pentapeptide-transferase activity"/>
    <property type="evidence" value="ECO:0007669"/>
    <property type="project" value="UniProtKB-UniRule"/>
</dbReference>
<dbReference type="GO" id="GO:0051301">
    <property type="term" value="P:cell division"/>
    <property type="evidence" value="ECO:0007669"/>
    <property type="project" value="UniProtKB-KW"/>
</dbReference>
<dbReference type="GO" id="GO:0071555">
    <property type="term" value="P:cell wall organization"/>
    <property type="evidence" value="ECO:0007669"/>
    <property type="project" value="UniProtKB-KW"/>
</dbReference>
<dbReference type="GO" id="GO:0009252">
    <property type="term" value="P:peptidoglycan biosynthetic process"/>
    <property type="evidence" value="ECO:0007669"/>
    <property type="project" value="UniProtKB-UniRule"/>
</dbReference>
<dbReference type="GO" id="GO:0008360">
    <property type="term" value="P:regulation of cell shape"/>
    <property type="evidence" value="ECO:0007669"/>
    <property type="project" value="UniProtKB-KW"/>
</dbReference>
<dbReference type="CDD" id="cd06852">
    <property type="entry name" value="GT_MraY"/>
    <property type="match status" value="1"/>
</dbReference>
<dbReference type="HAMAP" id="MF_00038">
    <property type="entry name" value="MraY"/>
    <property type="match status" value="1"/>
</dbReference>
<dbReference type="InterPro" id="IPR000715">
    <property type="entry name" value="Glycosyl_transferase_4"/>
</dbReference>
<dbReference type="InterPro" id="IPR003524">
    <property type="entry name" value="PNAcMuramoyl-5peptid_Trfase"/>
</dbReference>
<dbReference type="InterPro" id="IPR018480">
    <property type="entry name" value="PNAcMuramoyl-5peptid_Trfase_CS"/>
</dbReference>
<dbReference type="NCBIfam" id="TIGR00445">
    <property type="entry name" value="mraY"/>
    <property type="match status" value="1"/>
</dbReference>
<dbReference type="PANTHER" id="PTHR22926">
    <property type="entry name" value="PHOSPHO-N-ACETYLMURAMOYL-PENTAPEPTIDE-TRANSFERASE"/>
    <property type="match status" value="1"/>
</dbReference>
<dbReference type="PANTHER" id="PTHR22926:SF5">
    <property type="entry name" value="PHOSPHO-N-ACETYLMURAMOYL-PENTAPEPTIDE-TRANSFERASE HOMOLOG"/>
    <property type="match status" value="1"/>
</dbReference>
<dbReference type="Pfam" id="PF00953">
    <property type="entry name" value="Glycos_transf_4"/>
    <property type="match status" value="1"/>
</dbReference>
<dbReference type="Pfam" id="PF10555">
    <property type="entry name" value="MraY_sig1"/>
    <property type="match status" value="1"/>
</dbReference>
<dbReference type="PROSITE" id="PS01347">
    <property type="entry name" value="MRAY_1"/>
    <property type="match status" value="1"/>
</dbReference>
<dbReference type="PROSITE" id="PS01348">
    <property type="entry name" value="MRAY_2"/>
    <property type="match status" value="1"/>
</dbReference>
<sequence length="326" mass="35947">MFISISAGIVTFLLTLVGIPAFIQFYRKAQITGQQMHEDVKQHQAKAGTPTMGGLVFLIAAVVVSFLVALFSKQLTNNVGMILFILVLYGLVGFLDDFLKVFRKINEGLNPKQKLALQLLGGVIFYLFYERGGDMLSVFGYQVHLGIFYIIFALFWLVGFSNAVNLTDGIDGLASISVVISLSAYGVIAYVQGQMDILLVIFAMIGGLLGFFVFNHKPAKVFMGDVGSLALGGMLAAISMALHQEWTLLIIGIVYVFETTSVMMQVSYFKLTGGKRIFRMTPVHHHFELGGLSGKGNPWSEWKVDFFFWGVGLLASLLTFAILYLM</sequence>